<gene>
    <name evidence="1" type="primary">lpxD</name>
    <name type="ordered locus">Xfasm12_0356</name>
</gene>
<name>LPXD_XYLFM</name>
<comment type="function">
    <text evidence="1">Catalyzes the N-acylation of UDP-3-O-acylglucosamine using 3-hydroxyacyl-ACP as the acyl donor. Is involved in the biosynthesis of lipid A, a phosphorylated glycolipid that anchors the lipopolysaccharide to the outer membrane of the cell.</text>
</comment>
<comment type="catalytic activity">
    <reaction evidence="1">
        <text>a UDP-3-O-[(3R)-3-hydroxyacyl]-alpha-D-glucosamine + a (3R)-hydroxyacyl-[ACP] = a UDP-2-N,3-O-bis[(3R)-3-hydroxyacyl]-alpha-D-glucosamine + holo-[ACP] + H(+)</text>
        <dbReference type="Rhea" id="RHEA:53836"/>
        <dbReference type="Rhea" id="RHEA-COMP:9685"/>
        <dbReference type="Rhea" id="RHEA-COMP:9945"/>
        <dbReference type="ChEBI" id="CHEBI:15378"/>
        <dbReference type="ChEBI" id="CHEBI:64479"/>
        <dbReference type="ChEBI" id="CHEBI:78827"/>
        <dbReference type="ChEBI" id="CHEBI:137740"/>
        <dbReference type="ChEBI" id="CHEBI:137748"/>
        <dbReference type="EC" id="2.3.1.191"/>
    </reaction>
</comment>
<comment type="pathway">
    <text evidence="1">Bacterial outer membrane biogenesis; LPS lipid A biosynthesis.</text>
</comment>
<comment type="subunit">
    <text evidence="1">Homotrimer.</text>
</comment>
<comment type="similarity">
    <text evidence="1">Belongs to the transferase hexapeptide repeat family. LpxD subfamily.</text>
</comment>
<accession>B0U239</accession>
<organism>
    <name type="scientific">Xylella fastidiosa (strain M12)</name>
    <dbReference type="NCBI Taxonomy" id="405440"/>
    <lineage>
        <taxon>Bacteria</taxon>
        <taxon>Pseudomonadati</taxon>
        <taxon>Pseudomonadota</taxon>
        <taxon>Gammaproteobacteria</taxon>
        <taxon>Lysobacterales</taxon>
        <taxon>Lysobacteraceae</taxon>
        <taxon>Xylella</taxon>
    </lineage>
</organism>
<reference key="1">
    <citation type="journal article" date="2010" name="J. Bacteriol.">
        <title>Whole genome sequences of two Xylella fastidiosa strains (M12 and M23) causing almond leaf scorch disease in California.</title>
        <authorList>
            <person name="Chen J."/>
            <person name="Xie G."/>
            <person name="Han S."/>
            <person name="Chertkov O."/>
            <person name="Sims D."/>
            <person name="Civerolo E.L."/>
        </authorList>
    </citation>
    <scope>NUCLEOTIDE SEQUENCE [LARGE SCALE GENOMIC DNA]</scope>
    <source>
        <strain>M12</strain>
    </source>
</reference>
<evidence type="ECO:0000255" key="1">
    <source>
        <dbReference type="HAMAP-Rule" id="MF_00523"/>
    </source>
</evidence>
<protein>
    <recommendedName>
        <fullName evidence="1">UDP-3-O-acylglucosamine N-acyltransferase</fullName>
        <ecNumber evidence="1">2.3.1.191</ecNumber>
    </recommendedName>
</protein>
<feature type="chain" id="PRO_1000127698" description="UDP-3-O-acylglucosamine N-acyltransferase">
    <location>
        <begin position="1"/>
        <end position="338"/>
    </location>
</feature>
<feature type="active site" description="Proton acceptor" evidence="1">
    <location>
        <position position="239"/>
    </location>
</feature>
<proteinExistence type="inferred from homology"/>
<dbReference type="EC" id="2.3.1.191" evidence="1"/>
<dbReference type="EMBL" id="CP000941">
    <property type="protein sequence ID" value="ACA11373.1"/>
    <property type="molecule type" value="Genomic_DNA"/>
</dbReference>
<dbReference type="RefSeq" id="WP_004085216.1">
    <property type="nucleotide sequence ID" value="NC_010513.1"/>
</dbReference>
<dbReference type="SMR" id="B0U239"/>
<dbReference type="KEGG" id="xfm:Xfasm12_0356"/>
<dbReference type="HOGENOM" id="CLU_049865_0_1_6"/>
<dbReference type="UniPathway" id="UPA00973"/>
<dbReference type="GO" id="GO:0016020">
    <property type="term" value="C:membrane"/>
    <property type="evidence" value="ECO:0007669"/>
    <property type="project" value="GOC"/>
</dbReference>
<dbReference type="GO" id="GO:0016410">
    <property type="term" value="F:N-acyltransferase activity"/>
    <property type="evidence" value="ECO:0007669"/>
    <property type="project" value="InterPro"/>
</dbReference>
<dbReference type="GO" id="GO:0009245">
    <property type="term" value="P:lipid A biosynthetic process"/>
    <property type="evidence" value="ECO:0007669"/>
    <property type="project" value="UniProtKB-UniRule"/>
</dbReference>
<dbReference type="CDD" id="cd03352">
    <property type="entry name" value="LbH_LpxD"/>
    <property type="match status" value="1"/>
</dbReference>
<dbReference type="Gene3D" id="1.20.5.170">
    <property type="match status" value="1"/>
</dbReference>
<dbReference type="Gene3D" id="2.160.10.10">
    <property type="entry name" value="Hexapeptide repeat proteins"/>
    <property type="match status" value="1"/>
</dbReference>
<dbReference type="Gene3D" id="3.40.1390.10">
    <property type="entry name" value="MurE/MurF, N-terminal domain"/>
    <property type="match status" value="1"/>
</dbReference>
<dbReference type="HAMAP" id="MF_00523">
    <property type="entry name" value="LpxD"/>
    <property type="match status" value="1"/>
</dbReference>
<dbReference type="InterPro" id="IPR001451">
    <property type="entry name" value="Hexapep"/>
</dbReference>
<dbReference type="InterPro" id="IPR007691">
    <property type="entry name" value="LpxD"/>
</dbReference>
<dbReference type="InterPro" id="IPR011004">
    <property type="entry name" value="Trimer_LpxA-like_sf"/>
</dbReference>
<dbReference type="InterPro" id="IPR020573">
    <property type="entry name" value="UDP_GlcNAc_AcTrfase_non-rep"/>
</dbReference>
<dbReference type="NCBIfam" id="TIGR01853">
    <property type="entry name" value="lipid_A_lpxD"/>
    <property type="match status" value="1"/>
</dbReference>
<dbReference type="NCBIfam" id="NF002060">
    <property type="entry name" value="PRK00892.1"/>
    <property type="match status" value="1"/>
</dbReference>
<dbReference type="PANTHER" id="PTHR43378">
    <property type="entry name" value="UDP-3-O-ACYLGLUCOSAMINE N-ACYLTRANSFERASE"/>
    <property type="match status" value="1"/>
</dbReference>
<dbReference type="PANTHER" id="PTHR43378:SF2">
    <property type="entry name" value="UDP-3-O-ACYLGLUCOSAMINE N-ACYLTRANSFERASE 1, MITOCHONDRIAL-RELATED"/>
    <property type="match status" value="1"/>
</dbReference>
<dbReference type="Pfam" id="PF00132">
    <property type="entry name" value="Hexapep"/>
    <property type="match status" value="1"/>
</dbReference>
<dbReference type="Pfam" id="PF14602">
    <property type="entry name" value="Hexapep_2"/>
    <property type="match status" value="2"/>
</dbReference>
<dbReference type="Pfam" id="PF04613">
    <property type="entry name" value="LpxD"/>
    <property type="match status" value="1"/>
</dbReference>
<dbReference type="SUPFAM" id="SSF51161">
    <property type="entry name" value="Trimeric LpxA-like enzymes"/>
    <property type="match status" value="1"/>
</dbReference>
<keyword id="KW-0012">Acyltransferase</keyword>
<keyword id="KW-0441">Lipid A biosynthesis</keyword>
<keyword id="KW-0444">Lipid biosynthesis</keyword>
<keyword id="KW-0443">Lipid metabolism</keyword>
<keyword id="KW-0677">Repeat</keyword>
<keyword id="KW-0808">Transferase</keyword>
<sequence length="338" mass="35731">MPIFTAQELAERFNLQLFGDGNIRIHGVATLAQASPEQLSFLANPRYLTQLLNSRAGVIVLHADDVKAASGTVLIAKDPYVTFAKIATLFDIKPAREAGIHPLATVDPSAHVSPTAHVGAFVSIGARSSIGASCIIGTGSIIGDDCTIDDGSELIARVTLISRVRLGKRVRIHPGAVLGGEGFGLAMESGHWIKIPQLGGVVIGDDCEIGANSCIDRGALDDTVLEEDVHIDNLVQIAHNCRIGAHTAIAGCTGIAGSAKIGRYCLLGGHVGVVGHLQICDNVVITGKSVVRNSIHTPGEYSSGTPLTDNRTWRKNAVRFKQLDMLVRRMMAVSKEKA</sequence>